<sequence>MGPQGFYWSHPRKFGQGSRSCRVCSNRHGLIRKYGLNMCRQCFRQYAKDIGFIKLD</sequence>
<gene>
    <name type="primary">RPS29</name>
</gene>
<organism>
    <name type="scientific">Sus scrofa</name>
    <name type="common">Pig</name>
    <dbReference type="NCBI Taxonomy" id="9823"/>
    <lineage>
        <taxon>Eukaryota</taxon>
        <taxon>Metazoa</taxon>
        <taxon>Chordata</taxon>
        <taxon>Craniata</taxon>
        <taxon>Vertebrata</taxon>
        <taxon>Euteleostomi</taxon>
        <taxon>Mammalia</taxon>
        <taxon>Eutheria</taxon>
        <taxon>Laurasiatheria</taxon>
        <taxon>Artiodactyla</taxon>
        <taxon>Suina</taxon>
        <taxon>Suidae</taxon>
        <taxon>Sus</taxon>
    </lineage>
</organism>
<protein>
    <recommendedName>
        <fullName evidence="3">Small ribosomal subunit protein uS14</fullName>
    </recommendedName>
    <alternativeName>
        <fullName>40S ribosomal protein S29</fullName>
    </alternativeName>
</protein>
<comment type="function">
    <text evidence="1">Component of the small ribosomal subunit. The ribosome is a large ribonucleoprotein complex responsible for the synthesis of proteins in the cell.</text>
</comment>
<comment type="cofactor">
    <cofactor evidence="1">
        <name>Zn(2+)</name>
        <dbReference type="ChEBI" id="CHEBI:29105"/>
    </cofactor>
    <text evidence="1">Binds 1 zinc ion per subunit.</text>
</comment>
<comment type="subunit">
    <text evidence="2">Component of the 40S small ribosomal subunit.</text>
</comment>
<comment type="subcellular location">
    <subcellularLocation>
        <location evidence="1">Cytoplasm</location>
        <location evidence="1">Cytosol</location>
    </subcellularLocation>
    <subcellularLocation>
        <location evidence="2">Cytoplasm</location>
    </subcellularLocation>
    <subcellularLocation>
        <location evidence="2">Rough endoplasmic reticulum</location>
    </subcellularLocation>
    <text evidence="1 2">Detected on cytosolic polysomes (By similarity). Detected in ribosomes that are associated with the rough endoplasmic reticulum (PubMed:24930395).</text>
</comment>
<comment type="similarity">
    <text evidence="3">Belongs to the universal ribosomal protein uS14 family.</text>
</comment>
<keyword id="KW-0002">3D-structure</keyword>
<keyword id="KW-0007">Acetylation</keyword>
<keyword id="KW-0963">Cytoplasm</keyword>
<keyword id="KW-0256">Endoplasmic reticulum</keyword>
<keyword id="KW-0479">Metal-binding</keyword>
<keyword id="KW-0488">Methylation</keyword>
<keyword id="KW-0597">Phosphoprotein</keyword>
<keyword id="KW-1185">Reference proteome</keyword>
<keyword id="KW-0687">Ribonucleoprotein</keyword>
<keyword id="KW-0689">Ribosomal protein</keyword>
<keyword id="KW-0862">Zinc</keyword>
<proteinExistence type="evidence at protein level"/>
<feature type="chain" id="PRO_0000131021" description="Small ribosomal subunit protein uS14">
    <location>
        <begin position="1"/>
        <end position="56"/>
    </location>
</feature>
<feature type="binding site" evidence="1">
    <location>
        <position position="21"/>
    </location>
    <ligand>
        <name>Zn(2+)</name>
        <dbReference type="ChEBI" id="CHEBI:29105"/>
    </ligand>
</feature>
<feature type="binding site" evidence="1">
    <location>
        <position position="24"/>
    </location>
    <ligand>
        <name>Zn(2+)</name>
        <dbReference type="ChEBI" id="CHEBI:29105"/>
    </ligand>
</feature>
<feature type="binding site" evidence="1">
    <location>
        <position position="39"/>
    </location>
    <ligand>
        <name>Zn(2+)</name>
        <dbReference type="ChEBI" id="CHEBI:29105"/>
    </ligand>
</feature>
<feature type="binding site" evidence="1">
    <location>
        <position position="42"/>
    </location>
    <ligand>
        <name>Zn(2+)</name>
        <dbReference type="ChEBI" id="CHEBI:29105"/>
    </ligand>
</feature>
<feature type="modified residue" description="Phosphoserine" evidence="1">
    <location>
        <position position="9"/>
    </location>
</feature>
<feature type="modified residue" description="Omega-N-methylarginine" evidence="1">
    <location>
        <position position="12"/>
    </location>
</feature>
<feature type="modified residue" description="N6-acetyllysine" evidence="1">
    <location>
        <position position="48"/>
    </location>
</feature>
<name>RS29_PIG</name>
<accession>Q6QAP6</accession>
<reference key="1">
    <citation type="submission" date="2004-02" db="EMBL/GenBank/DDBJ databases">
        <title>Identification of differentially expressed genes in porcine embryos.</title>
        <authorList>
            <person name="Lee H.Y."/>
            <person name="Cui X.S."/>
            <person name="Jeong Y.J."/>
            <person name="Shin M.L."/>
            <person name="Hwang K.C."/>
            <person name="Kim N.H."/>
        </authorList>
    </citation>
    <scope>NUCLEOTIDE SEQUENCE [MRNA]</scope>
</reference>
<reference evidence="4 5" key="2">
    <citation type="journal article" date="2014" name="Cell">
        <title>Structure of the mammalian ribosome-Sec61 complex to 3.4 A resolution.</title>
        <authorList>
            <person name="Voorhees R.M."/>
            <person name="Fernandez I.S."/>
            <person name="Scheres S.H."/>
            <person name="Hegde R.S."/>
        </authorList>
    </citation>
    <scope>STRUCTURE BY ELECTRON MICROSCOPY (3.50 ANGSTROMS)</scope>
    <scope>SUBCELLULAR LOCATION</scope>
    <scope>SUBUNIT</scope>
</reference>
<dbReference type="EMBL" id="AY550074">
    <property type="protein sequence ID" value="AAS55932.1"/>
    <property type="molecule type" value="mRNA"/>
</dbReference>
<dbReference type="RefSeq" id="NP_001001633.1">
    <property type="nucleotide sequence ID" value="NM_001001633.1"/>
</dbReference>
<dbReference type="PDB" id="3J7P">
    <property type="method" value="EM"/>
    <property type="resolution" value="3.50 A"/>
    <property type="chains" value="Sd=1-56"/>
</dbReference>
<dbReference type="PDB" id="3J7R">
    <property type="method" value="EM"/>
    <property type="resolution" value="3.90 A"/>
    <property type="chains" value="Sd=1-56"/>
</dbReference>
<dbReference type="PDBsum" id="3J7P"/>
<dbReference type="PDBsum" id="3J7R"/>
<dbReference type="SMR" id="Q6QAP6"/>
<dbReference type="FunCoup" id="Q6QAP6">
    <property type="interactions" value="384"/>
</dbReference>
<dbReference type="STRING" id="9823.ENSSSCP00000046039"/>
<dbReference type="PaxDb" id="9823-ENSSSCP00000005381"/>
<dbReference type="PeptideAtlas" id="Q6QAP6"/>
<dbReference type="GeneID" id="414391"/>
<dbReference type="CTD" id="6235"/>
<dbReference type="eggNOG" id="KOG3506">
    <property type="taxonomic scope" value="Eukaryota"/>
</dbReference>
<dbReference type="InParanoid" id="Q6QAP6"/>
<dbReference type="OrthoDB" id="9688859at2759"/>
<dbReference type="Proteomes" id="UP000008227">
    <property type="component" value="Unplaced"/>
</dbReference>
<dbReference type="Proteomes" id="UP000314985">
    <property type="component" value="Unplaced"/>
</dbReference>
<dbReference type="Proteomes" id="UP000694570">
    <property type="component" value="Unplaced"/>
</dbReference>
<dbReference type="Proteomes" id="UP000694571">
    <property type="component" value="Unplaced"/>
</dbReference>
<dbReference type="Proteomes" id="UP000694720">
    <property type="component" value="Unplaced"/>
</dbReference>
<dbReference type="Proteomes" id="UP000694722">
    <property type="component" value="Unplaced"/>
</dbReference>
<dbReference type="Proteomes" id="UP000694723">
    <property type="component" value="Unplaced"/>
</dbReference>
<dbReference type="Proteomes" id="UP000694724">
    <property type="component" value="Unplaced"/>
</dbReference>
<dbReference type="Proteomes" id="UP000694725">
    <property type="component" value="Unplaced"/>
</dbReference>
<dbReference type="Proteomes" id="UP000694726">
    <property type="component" value="Unplaced"/>
</dbReference>
<dbReference type="Proteomes" id="UP000694727">
    <property type="component" value="Unplaced"/>
</dbReference>
<dbReference type="Proteomes" id="UP000694728">
    <property type="component" value="Unplaced"/>
</dbReference>
<dbReference type="GO" id="GO:0098556">
    <property type="term" value="C:cytoplasmic side of rough endoplasmic reticulum membrane"/>
    <property type="evidence" value="ECO:0000314"/>
    <property type="project" value="UniProtKB"/>
</dbReference>
<dbReference type="GO" id="GO:0022627">
    <property type="term" value="C:cytosolic small ribosomal subunit"/>
    <property type="evidence" value="ECO:0000314"/>
    <property type="project" value="UniProtKB"/>
</dbReference>
<dbReference type="GO" id="GO:0005840">
    <property type="term" value="C:ribosome"/>
    <property type="evidence" value="ECO:0000250"/>
    <property type="project" value="UniProtKB"/>
</dbReference>
<dbReference type="GO" id="GO:0003735">
    <property type="term" value="F:structural constituent of ribosome"/>
    <property type="evidence" value="ECO:0000318"/>
    <property type="project" value="GO_Central"/>
</dbReference>
<dbReference type="GO" id="GO:0008270">
    <property type="term" value="F:zinc ion binding"/>
    <property type="evidence" value="ECO:0000250"/>
    <property type="project" value="UniProtKB"/>
</dbReference>
<dbReference type="GO" id="GO:0002181">
    <property type="term" value="P:cytoplasmic translation"/>
    <property type="evidence" value="ECO:0000250"/>
    <property type="project" value="UniProtKB"/>
</dbReference>
<dbReference type="FunFam" id="4.10.830.10:FF:000002">
    <property type="entry name" value="40S ribosomal protein S29"/>
    <property type="match status" value="1"/>
</dbReference>
<dbReference type="Gene3D" id="4.10.830.10">
    <property type="entry name" value="30s Ribosomal Protein S14, Chain N"/>
    <property type="match status" value="1"/>
</dbReference>
<dbReference type="InterPro" id="IPR001209">
    <property type="entry name" value="Ribosomal_uS14"/>
</dbReference>
<dbReference type="InterPro" id="IPR018271">
    <property type="entry name" value="Ribosomal_uS14_CS"/>
</dbReference>
<dbReference type="InterPro" id="IPR039744">
    <property type="entry name" value="RIbosomal_uS14_euk_arc"/>
</dbReference>
<dbReference type="InterPro" id="IPR043140">
    <property type="entry name" value="Ribosomal_uS14_sf"/>
</dbReference>
<dbReference type="NCBIfam" id="NF004424">
    <property type="entry name" value="PRK05766.1"/>
    <property type="match status" value="1"/>
</dbReference>
<dbReference type="PANTHER" id="PTHR12010">
    <property type="entry name" value="40S RIBOSOMAL PROTEIN S29"/>
    <property type="match status" value="1"/>
</dbReference>
<dbReference type="PANTHER" id="PTHR12010:SF26">
    <property type="entry name" value="SMALL RIBOSOMAL SUBUNIT PROTEIN US14"/>
    <property type="match status" value="1"/>
</dbReference>
<dbReference type="Pfam" id="PF00253">
    <property type="entry name" value="Ribosomal_S14"/>
    <property type="match status" value="1"/>
</dbReference>
<dbReference type="PROSITE" id="PS00527">
    <property type="entry name" value="RIBOSOMAL_S14"/>
    <property type="match status" value="1"/>
</dbReference>
<evidence type="ECO:0000250" key="1">
    <source>
        <dbReference type="UniProtKB" id="P62273"/>
    </source>
</evidence>
<evidence type="ECO:0000269" key="2">
    <source>
    </source>
</evidence>
<evidence type="ECO:0000305" key="3"/>
<evidence type="ECO:0007744" key="4">
    <source>
        <dbReference type="PDB" id="3J7P"/>
    </source>
</evidence>
<evidence type="ECO:0007744" key="5">
    <source>
        <dbReference type="PDB" id="3J7R"/>
    </source>
</evidence>